<reference key="1">
    <citation type="journal article" date="2000" name="Nucleic Acids Res.">
        <title>Complete genome sequence of the alkaliphilic bacterium Bacillus halodurans and genomic sequence comparison with Bacillus subtilis.</title>
        <authorList>
            <person name="Takami H."/>
            <person name="Nakasone K."/>
            <person name="Takaki Y."/>
            <person name="Maeno G."/>
            <person name="Sasaki R."/>
            <person name="Masui N."/>
            <person name="Fuji F."/>
            <person name="Hirama C."/>
            <person name="Nakamura Y."/>
            <person name="Ogasawara N."/>
            <person name="Kuhara S."/>
            <person name="Horikoshi K."/>
        </authorList>
    </citation>
    <scope>NUCLEOTIDE SEQUENCE [LARGE SCALE GENOMIC DNA]</scope>
    <source>
        <strain>ATCC BAA-125 / DSM 18197 / FERM 7344 / JCM 9153 / C-125</strain>
    </source>
</reference>
<name>UXUA1_HALH5</name>
<sequence>MRMVFRWFGAGNDSVSLAHIRQIPGVEGIVWALHDIPPGEVWPLSRIMEIKEQAEQHQFHIDVVESVNVHEDIKLGLPTRDRYIEAYKQTIKHLAKAGVKVICYNFMPVFDWVRTDLYKKLEDGSTALFYEKKEVDEMNPKGLVETIASNKTFTMPGWEPERLASLKTLFEAYEHVSTEDLWDHLHYFLQEVIPVAEACDIKMAIHPDDPPWPIFGLPRIVTNHDNIRRLLKLVDHPTNGITLCSGALGADPNNQVPEMIREFADRIPFAHIRNIKRFDNGDFVETSHREQDGSIDIVSIVKAYHEVGFTGYVRPDHGRHIWDEQCRPGYGLYDRALGIMYLWGIWDSVQNGQRMHDLTAK</sequence>
<accession>Q9KDZ8</accession>
<evidence type="ECO:0000250" key="1"/>
<evidence type="ECO:0000305" key="2"/>
<organism>
    <name type="scientific">Halalkalibacterium halodurans (strain ATCC BAA-125 / DSM 18197 / FERM 7344 / JCM 9153 / C-125)</name>
    <name type="common">Bacillus halodurans</name>
    <dbReference type="NCBI Taxonomy" id="272558"/>
    <lineage>
        <taxon>Bacteria</taxon>
        <taxon>Bacillati</taxon>
        <taxon>Bacillota</taxon>
        <taxon>Bacilli</taxon>
        <taxon>Bacillales</taxon>
        <taxon>Bacillaceae</taxon>
        <taxon>Halalkalibacterium (ex Joshi et al. 2022)</taxon>
    </lineage>
</organism>
<feature type="chain" id="PRO_0000170660" description="Mannonate dehydratase 1">
    <location>
        <begin position="1"/>
        <end position="361"/>
    </location>
</feature>
<gene>
    <name type="primary">uxuA1</name>
    <name type="ordered locus">BH1063</name>
</gene>
<protein>
    <recommendedName>
        <fullName>Mannonate dehydratase 1</fullName>
        <ecNumber>4.2.1.8</ecNumber>
    </recommendedName>
    <alternativeName>
        <fullName>D-mannonate hydro-lyase 1</fullName>
    </alternativeName>
</protein>
<comment type="function">
    <text evidence="1">Catalyzes the dehydration of D-mannonate.</text>
</comment>
<comment type="catalytic activity">
    <reaction>
        <text>D-mannonate = 2-dehydro-3-deoxy-D-gluconate + H2O</text>
        <dbReference type="Rhea" id="RHEA:20097"/>
        <dbReference type="ChEBI" id="CHEBI:15377"/>
        <dbReference type="ChEBI" id="CHEBI:17767"/>
        <dbReference type="ChEBI" id="CHEBI:57990"/>
        <dbReference type="EC" id="4.2.1.8"/>
    </reaction>
</comment>
<comment type="cofactor">
    <cofactor evidence="1">
        <name>Fe(2+)</name>
        <dbReference type="ChEBI" id="CHEBI:29033"/>
    </cofactor>
    <cofactor evidence="1">
        <name>Mn(2+)</name>
        <dbReference type="ChEBI" id="CHEBI:29035"/>
    </cofactor>
</comment>
<comment type="pathway">
    <text>Carbohydrate metabolism; pentose and glucuronate interconversion.</text>
</comment>
<comment type="similarity">
    <text evidence="2">Belongs to the mannonate dehydratase family.</text>
</comment>
<dbReference type="EC" id="4.2.1.8"/>
<dbReference type="EMBL" id="BA000004">
    <property type="protein sequence ID" value="BAB04782.1"/>
    <property type="molecule type" value="Genomic_DNA"/>
</dbReference>
<dbReference type="PIR" id="G83782">
    <property type="entry name" value="G83782"/>
</dbReference>
<dbReference type="RefSeq" id="WP_010897233.1">
    <property type="nucleotide sequence ID" value="NC_002570.2"/>
</dbReference>
<dbReference type="SMR" id="Q9KDZ8"/>
<dbReference type="STRING" id="272558.gene:10726957"/>
<dbReference type="KEGG" id="bha:BH1063"/>
<dbReference type="eggNOG" id="COG1312">
    <property type="taxonomic scope" value="Bacteria"/>
</dbReference>
<dbReference type="HOGENOM" id="CLU_058621_1_0_9"/>
<dbReference type="OrthoDB" id="9780250at2"/>
<dbReference type="UniPathway" id="UPA00246"/>
<dbReference type="Proteomes" id="UP000001258">
    <property type="component" value="Chromosome"/>
</dbReference>
<dbReference type="GO" id="GO:0008198">
    <property type="term" value="F:ferrous iron binding"/>
    <property type="evidence" value="ECO:0007669"/>
    <property type="project" value="TreeGrafter"/>
</dbReference>
<dbReference type="GO" id="GO:0030145">
    <property type="term" value="F:manganese ion binding"/>
    <property type="evidence" value="ECO:0007669"/>
    <property type="project" value="TreeGrafter"/>
</dbReference>
<dbReference type="GO" id="GO:0008927">
    <property type="term" value="F:mannonate dehydratase activity"/>
    <property type="evidence" value="ECO:0007669"/>
    <property type="project" value="UniProtKB-UniRule"/>
</dbReference>
<dbReference type="GO" id="GO:0042840">
    <property type="term" value="P:D-glucuronate catabolic process"/>
    <property type="evidence" value="ECO:0007669"/>
    <property type="project" value="TreeGrafter"/>
</dbReference>
<dbReference type="Gene3D" id="3.20.20.150">
    <property type="entry name" value="Divalent-metal-dependent TIM barrel enzymes"/>
    <property type="match status" value="1"/>
</dbReference>
<dbReference type="HAMAP" id="MF_00106">
    <property type="entry name" value="UxuA"/>
    <property type="match status" value="1"/>
</dbReference>
<dbReference type="InterPro" id="IPR004628">
    <property type="entry name" value="Man_deHydtase"/>
</dbReference>
<dbReference type="InterPro" id="IPR036237">
    <property type="entry name" value="Xyl_isomerase-like_sf"/>
</dbReference>
<dbReference type="NCBIfam" id="NF003027">
    <property type="entry name" value="PRK03906.1"/>
    <property type="match status" value="2"/>
</dbReference>
<dbReference type="NCBIfam" id="TIGR00695">
    <property type="entry name" value="uxuA"/>
    <property type="match status" value="1"/>
</dbReference>
<dbReference type="PANTHER" id="PTHR30387">
    <property type="entry name" value="MANNONATE DEHYDRATASE"/>
    <property type="match status" value="1"/>
</dbReference>
<dbReference type="PANTHER" id="PTHR30387:SF2">
    <property type="entry name" value="MANNONATE DEHYDRATASE"/>
    <property type="match status" value="1"/>
</dbReference>
<dbReference type="Pfam" id="PF03786">
    <property type="entry name" value="UxuA"/>
    <property type="match status" value="1"/>
</dbReference>
<dbReference type="PIRSF" id="PIRSF016049">
    <property type="entry name" value="Man_dehyd"/>
    <property type="match status" value="1"/>
</dbReference>
<dbReference type="SUPFAM" id="SSF51658">
    <property type="entry name" value="Xylose isomerase-like"/>
    <property type="match status" value="1"/>
</dbReference>
<proteinExistence type="inferred from homology"/>
<keyword id="KW-0408">Iron</keyword>
<keyword id="KW-0456">Lyase</keyword>
<keyword id="KW-0464">Manganese</keyword>
<keyword id="KW-1185">Reference proteome</keyword>